<reference key="1">
    <citation type="journal article" date="2007" name="Proc. Natl. Acad. Sci. U.S.A.">
        <title>The genome of Syntrophus aciditrophicus: life at the thermodynamic limit of microbial growth.</title>
        <authorList>
            <person name="McInerney M.J."/>
            <person name="Rohlin L."/>
            <person name="Mouttaki H."/>
            <person name="Kim U."/>
            <person name="Krupp R.S."/>
            <person name="Rios-Hernandez L."/>
            <person name="Sieber J."/>
            <person name="Struchtemeyer C.G."/>
            <person name="Bhattacharyya A."/>
            <person name="Campbell J.W."/>
            <person name="Gunsalus R.P."/>
        </authorList>
    </citation>
    <scope>NUCLEOTIDE SEQUENCE [LARGE SCALE GENOMIC DNA]</scope>
    <source>
        <strain>SB</strain>
    </source>
</reference>
<evidence type="ECO:0000255" key="1">
    <source>
        <dbReference type="HAMAP-Rule" id="MF_00741"/>
    </source>
</evidence>
<name>PUR5_SYNAS</name>
<comment type="catalytic activity">
    <reaction evidence="1">
        <text>2-formamido-N(1)-(5-O-phospho-beta-D-ribosyl)acetamidine + ATP = 5-amino-1-(5-phospho-beta-D-ribosyl)imidazole + ADP + phosphate + H(+)</text>
        <dbReference type="Rhea" id="RHEA:23032"/>
        <dbReference type="ChEBI" id="CHEBI:15378"/>
        <dbReference type="ChEBI" id="CHEBI:30616"/>
        <dbReference type="ChEBI" id="CHEBI:43474"/>
        <dbReference type="ChEBI" id="CHEBI:137981"/>
        <dbReference type="ChEBI" id="CHEBI:147287"/>
        <dbReference type="ChEBI" id="CHEBI:456216"/>
        <dbReference type="EC" id="6.3.3.1"/>
    </reaction>
</comment>
<comment type="pathway">
    <text evidence="1">Purine metabolism; IMP biosynthesis via de novo pathway; 5-amino-1-(5-phospho-D-ribosyl)imidazole from N(2)-formyl-N(1)-(5-phospho-D-ribosyl)glycinamide: step 2/2.</text>
</comment>
<comment type="subcellular location">
    <subcellularLocation>
        <location evidence="1">Cytoplasm</location>
    </subcellularLocation>
</comment>
<comment type="similarity">
    <text evidence="1">Belongs to the AIR synthase family.</text>
</comment>
<feature type="chain" id="PRO_0000258426" description="Phosphoribosylformylglycinamidine cyclo-ligase">
    <location>
        <begin position="1"/>
        <end position="347"/>
    </location>
</feature>
<gene>
    <name evidence="1" type="primary">purM</name>
    <name type="ordered locus">SYNAS_16200</name>
    <name type="ORF">SYN_00889</name>
</gene>
<organism>
    <name type="scientific">Syntrophus aciditrophicus (strain SB)</name>
    <dbReference type="NCBI Taxonomy" id="56780"/>
    <lineage>
        <taxon>Bacteria</taxon>
        <taxon>Pseudomonadati</taxon>
        <taxon>Thermodesulfobacteriota</taxon>
        <taxon>Syntrophia</taxon>
        <taxon>Syntrophales</taxon>
        <taxon>Syntrophaceae</taxon>
        <taxon>Syntrophus</taxon>
    </lineage>
</organism>
<accession>Q2LTT5</accession>
<dbReference type="EC" id="6.3.3.1" evidence="1"/>
<dbReference type="EMBL" id="CP000252">
    <property type="protein sequence ID" value="ABC77499.1"/>
    <property type="molecule type" value="Genomic_DNA"/>
</dbReference>
<dbReference type="RefSeq" id="WP_011417521.1">
    <property type="nucleotide sequence ID" value="NC_007759.1"/>
</dbReference>
<dbReference type="SMR" id="Q2LTT5"/>
<dbReference type="FunCoup" id="Q2LTT5">
    <property type="interactions" value="481"/>
</dbReference>
<dbReference type="STRING" id="56780.SYN_00889"/>
<dbReference type="KEGG" id="sat:SYN_00889"/>
<dbReference type="eggNOG" id="COG0150">
    <property type="taxonomic scope" value="Bacteria"/>
</dbReference>
<dbReference type="HOGENOM" id="CLU_047116_0_0_7"/>
<dbReference type="InParanoid" id="Q2LTT5"/>
<dbReference type="OrthoDB" id="9777881at2"/>
<dbReference type="UniPathway" id="UPA00074">
    <property type="reaction ID" value="UER00129"/>
</dbReference>
<dbReference type="Proteomes" id="UP000001933">
    <property type="component" value="Chromosome"/>
</dbReference>
<dbReference type="GO" id="GO:0005829">
    <property type="term" value="C:cytosol"/>
    <property type="evidence" value="ECO:0007669"/>
    <property type="project" value="TreeGrafter"/>
</dbReference>
<dbReference type="GO" id="GO:0005524">
    <property type="term" value="F:ATP binding"/>
    <property type="evidence" value="ECO:0007669"/>
    <property type="project" value="UniProtKB-KW"/>
</dbReference>
<dbReference type="GO" id="GO:0004637">
    <property type="term" value="F:phosphoribosylamine-glycine ligase activity"/>
    <property type="evidence" value="ECO:0007669"/>
    <property type="project" value="TreeGrafter"/>
</dbReference>
<dbReference type="GO" id="GO:0004641">
    <property type="term" value="F:phosphoribosylformylglycinamidine cyclo-ligase activity"/>
    <property type="evidence" value="ECO:0007669"/>
    <property type="project" value="UniProtKB-UniRule"/>
</dbReference>
<dbReference type="GO" id="GO:0006189">
    <property type="term" value="P:'de novo' IMP biosynthetic process"/>
    <property type="evidence" value="ECO:0007669"/>
    <property type="project" value="UniProtKB-UniRule"/>
</dbReference>
<dbReference type="GO" id="GO:0046084">
    <property type="term" value="P:adenine biosynthetic process"/>
    <property type="evidence" value="ECO:0007669"/>
    <property type="project" value="TreeGrafter"/>
</dbReference>
<dbReference type="CDD" id="cd02196">
    <property type="entry name" value="PurM"/>
    <property type="match status" value="1"/>
</dbReference>
<dbReference type="FunFam" id="3.30.1330.10:FF:000001">
    <property type="entry name" value="Phosphoribosylformylglycinamidine cyclo-ligase"/>
    <property type="match status" value="1"/>
</dbReference>
<dbReference type="FunFam" id="3.90.650.10:FF:000001">
    <property type="entry name" value="Phosphoribosylformylglycinamidine cyclo-ligase"/>
    <property type="match status" value="1"/>
</dbReference>
<dbReference type="Gene3D" id="3.90.650.10">
    <property type="entry name" value="PurM-like C-terminal domain"/>
    <property type="match status" value="1"/>
</dbReference>
<dbReference type="Gene3D" id="3.30.1330.10">
    <property type="entry name" value="PurM-like, N-terminal domain"/>
    <property type="match status" value="1"/>
</dbReference>
<dbReference type="HAMAP" id="MF_00741">
    <property type="entry name" value="AIRS"/>
    <property type="match status" value="1"/>
</dbReference>
<dbReference type="InterPro" id="IPR010918">
    <property type="entry name" value="PurM-like_C_dom"/>
</dbReference>
<dbReference type="InterPro" id="IPR036676">
    <property type="entry name" value="PurM-like_C_sf"/>
</dbReference>
<dbReference type="InterPro" id="IPR016188">
    <property type="entry name" value="PurM-like_N"/>
</dbReference>
<dbReference type="InterPro" id="IPR036921">
    <property type="entry name" value="PurM-like_N_sf"/>
</dbReference>
<dbReference type="InterPro" id="IPR004733">
    <property type="entry name" value="PurM_cligase"/>
</dbReference>
<dbReference type="NCBIfam" id="TIGR00878">
    <property type="entry name" value="purM"/>
    <property type="match status" value="1"/>
</dbReference>
<dbReference type="PANTHER" id="PTHR10520:SF12">
    <property type="entry name" value="TRIFUNCTIONAL PURINE BIOSYNTHETIC PROTEIN ADENOSINE-3"/>
    <property type="match status" value="1"/>
</dbReference>
<dbReference type="PANTHER" id="PTHR10520">
    <property type="entry name" value="TRIFUNCTIONAL PURINE BIOSYNTHETIC PROTEIN ADENOSINE-3-RELATED"/>
    <property type="match status" value="1"/>
</dbReference>
<dbReference type="Pfam" id="PF00586">
    <property type="entry name" value="AIRS"/>
    <property type="match status" value="1"/>
</dbReference>
<dbReference type="Pfam" id="PF02769">
    <property type="entry name" value="AIRS_C"/>
    <property type="match status" value="1"/>
</dbReference>
<dbReference type="SUPFAM" id="SSF56042">
    <property type="entry name" value="PurM C-terminal domain-like"/>
    <property type="match status" value="1"/>
</dbReference>
<dbReference type="SUPFAM" id="SSF55326">
    <property type="entry name" value="PurM N-terminal domain-like"/>
    <property type="match status" value="1"/>
</dbReference>
<keyword id="KW-0067">ATP-binding</keyword>
<keyword id="KW-0963">Cytoplasm</keyword>
<keyword id="KW-0436">Ligase</keyword>
<keyword id="KW-0547">Nucleotide-binding</keyword>
<keyword id="KW-0658">Purine biosynthesis</keyword>
<keyword id="KW-1185">Reference proteome</keyword>
<proteinExistence type="inferred from homology"/>
<sequence>MREQSSYKDAGVDIDKANLFISRIIPLIKMTSRKEVMKGIGGFGGLFHLDLKKIKDPVLVAATDGVGTKIKIAQMMNKHDTVGIDLVAMSVNDIIVQGAEPIFFLDYIAIGQMDVERNVKLIEGIVKGCQEAGCALIGGETAEMPGIYSENEYDLAGFCIGVVENGRIIDGSDIRVGDRVIGIASNGIHSNGYSLVRKVIFDKAKLNVDDTIEGIENSIGEELLRPTRIYVKPVLNLMKSFNIKGIVHITGGGFVDNIPRIVPNQCCTVIRMNSWQIPPIFSIIQELGDIDQMEMVRVFNMGIGMILIVSEKETDDIVERLNMLGEKAYIIGSIEKADGEKSAVSFT</sequence>
<protein>
    <recommendedName>
        <fullName evidence="1">Phosphoribosylformylglycinamidine cyclo-ligase</fullName>
        <ecNumber evidence="1">6.3.3.1</ecNumber>
    </recommendedName>
    <alternativeName>
        <fullName evidence="1">AIR synthase</fullName>
    </alternativeName>
    <alternativeName>
        <fullName evidence="1">AIRS</fullName>
    </alternativeName>
    <alternativeName>
        <fullName evidence="1">Phosphoribosyl-aminoimidazole synthetase</fullName>
    </alternativeName>
</protein>